<proteinExistence type="inferred from homology"/>
<evidence type="ECO:0000255" key="1">
    <source>
        <dbReference type="HAMAP-Rule" id="MF_01318"/>
    </source>
</evidence>
<evidence type="ECO:0000305" key="2"/>
<sequence>MAKLTKRMRVIREKVDATKQYDINEAIALLKELATAKFNESVDVAVNLGIDARKSDQNVRGATVLPHGTGRSVRVAVFTQGPNAEAAKAAGAELVGMEDLADQIKKGEMNFDVVIASPDAMRVVGQLGQVLGPRGLMPNPKVGTVTPNVAEAVKNAKAGQVRYRNDKNGIIHTTIGKVDFDADKLKENLEALLVALKKAKPSQAKGVYIKKVSISTTMGAGVAVDQAGLSASAN</sequence>
<gene>
    <name evidence="1" type="primary">rplA</name>
    <name type="ordered locus">SSPA3703</name>
</gene>
<accession>B5BJQ0</accession>
<dbReference type="EMBL" id="FM200053">
    <property type="protein sequence ID" value="CAR61986.1"/>
    <property type="molecule type" value="Genomic_DNA"/>
</dbReference>
<dbReference type="RefSeq" id="WP_001096676.1">
    <property type="nucleotide sequence ID" value="NC_011147.1"/>
</dbReference>
<dbReference type="SMR" id="B5BJQ0"/>
<dbReference type="KEGG" id="sek:SSPA3703"/>
<dbReference type="HOGENOM" id="CLU_062853_0_0_6"/>
<dbReference type="Proteomes" id="UP000001869">
    <property type="component" value="Chromosome"/>
</dbReference>
<dbReference type="GO" id="GO:0022625">
    <property type="term" value="C:cytosolic large ribosomal subunit"/>
    <property type="evidence" value="ECO:0007669"/>
    <property type="project" value="TreeGrafter"/>
</dbReference>
<dbReference type="GO" id="GO:0019843">
    <property type="term" value="F:rRNA binding"/>
    <property type="evidence" value="ECO:0007669"/>
    <property type="project" value="UniProtKB-UniRule"/>
</dbReference>
<dbReference type="GO" id="GO:0003735">
    <property type="term" value="F:structural constituent of ribosome"/>
    <property type="evidence" value="ECO:0007669"/>
    <property type="project" value="InterPro"/>
</dbReference>
<dbReference type="GO" id="GO:0000049">
    <property type="term" value="F:tRNA binding"/>
    <property type="evidence" value="ECO:0007669"/>
    <property type="project" value="UniProtKB-KW"/>
</dbReference>
<dbReference type="GO" id="GO:0006417">
    <property type="term" value="P:regulation of translation"/>
    <property type="evidence" value="ECO:0007669"/>
    <property type="project" value="UniProtKB-KW"/>
</dbReference>
<dbReference type="GO" id="GO:0006412">
    <property type="term" value="P:translation"/>
    <property type="evidence" value="ECO:0007669"/>
    <property type="project" value="UniProtKB-UniRule"/>
</dbReference>
<dbReference type="CDD" id="cd00403">
    <property type="entry name" value="Ribosomal_L1"/>
    <property type="match status" value="1"/>
</dbReference>
<dbReference type="FunFam" id="3.40.50.790:FF:000001">
    <property type="entry name" value="50S ribosomal protein L1"/>
    <property type="match status" value="1"/>
</dbReference>
<dbReference type="Gene3D" id="3.30.190.20">
    <property type="match status" value="1"/>
</dbReference>
<dbReference type="Gene3D" id="3.40.50.790">
    <property type="match status" value="1"/>
</dbReference>
<dbReference type="HAMAP" id="MF_01318_B">
    <property type="entry name" value="Ribosomal_uL1_B"/>
    <property type="match status" value="1"/>
</dbReference>
<dbReference type="InterPro" id="IPR005878">
    <property type="entry name" value="Ribosom_uL1_bac-type"/>
</dbReference>
<dbReference type="InterPro" id="IPR002143">
    <property type="entry name" value="Ribosomal_uL1"/>
</dbReference>
<dbReference type="InterPro" id="IPR023674">
    <property type="entry name" value="Ribosomal_uL1-like"/>
</dbReference>
<dbReference type="InterPro" id="IPR028364">
    <property type="entry name" value="Ribosomal_uL1/biogenesis"/>
</dbReference>
<dbReference type="InterPro" id="IPR016095">
    <property type="entry name" value="Ribosomal_uL1_3-a/b-sand"/>
</dbReference>
<dbReference type="InterPro" id="IPR023673">
    <property type="entry name" value="Ribosomal_uL1_CS"/>
</dbReference>
<dbReference type="NCBIfam" id="TIGR01169">
    <property type="entry name" value="rplA_bact"/>
    <property type="match status" value="1"/>
</dbReference>
<dbReference type="PANTHER" id="PTHR36427">
    <property type="entry name" value="54S RIBOSOMAL PROTEIN L1, MITOCHONDRIAL"/>
    <property type="match status" value="1"/>
</dbReference>
<dbReference type="PANTHER" id="PTHR36427:SF3">
    <property type="entry name" value="LARGE RIBOSOMAL SUBUNIT PROTEIN UL1M"/>
    <property type="match status" value="1"/>
</dbReference>
<dbReference type="Pfam" id="PF00687">
    <property type="entry name" value="Ribosomal_L1"/>
    <property type="match status" value="1"/>
</dbReference>
<dbReference type="PIRSF" id="PIRSF002155">
    <property type="entry name" value="Ribosomal_L1"/>
    <property type="match status" value="1"/>
</dbReference>
<dbReference type="SUPFAM" id="SSF56808">
    <property type="entry name" value="Ribosomal protein L1"/>
    <property type="match status" value="1"/>
</dbReference>
<dbReference type="PROSITE" id="PS01199">
    <property type="entry name" value="RIBOSOMAL_L1"/>
    <property type="match status" value="1"/>
</dbReference>
<reference key="1">
    <citation type="journal article" date="2009" name="BMC Genomics">
        <title>Pseudogene accumulation in the evolutionary histories of Salmonella enterica serovars Paratyphi A and Typhi.</title>
        <authorList>
            <person name="Holt K.E."/>
            <person name="Thomson N.R."/>
            <person name="Wain J."/>
            <person name="Langridge G.C."/>
            <person name="Hasan R."/>
            <person name="Bhutta Z.A."/>
            <person name="Quail M.A."/>
            <person name="Norbertczak H."/>
            <person name="Walker D."/>
            <person name="Simmonds M."/>
            <person name="White B."/>
            <person name="Bason N."/>
            <person name="Mungall K."/>
            <person name="Dougan G."/>
            <person name="Parkhill J."/>
        </authorList>
    </citation>
    <scope>NUCLEOTIDE SEQUENCE [LARGE SCALE GENOMIC DNA]</scope>
    <source>
        <strain>AKU_12601</strain>
    </source>
</reference>
<name>RL1_SALPK</name>
<organism>
    <name type="scientific">Salmonella paratyphi A (strain AKU_12601)</name>
    <dbReference type="NCBI Taxonomy" id="554290"/>
    <lineage>
        <taxon>Bacteria</taxon>
        <taxon>Pseudomonadati</taxon>
        <taxon>Pseudomonadota</taxon>
        <taxon>Gammaproteobacteria</taxon>
        <taxon>Enterobacterales</taxon>
        <taxon>Enterobacteriaceae</taxon>
        <taxon>Salmonella</taxon>
    </lineage>
</organism>
<comment type="function">
    <text evidence="1">Binds directly to 23S rRNA. The L1 stalk is quite mobile in the ribosome, and is involved in E site tRNA release.</text>
</comment>
<comment type="function">
    <text evidence="1">Protein L1 is also a translational repressor protein, it controls the translation of the L11 operon by binding to its mRNA.</text>
</comment>
<comment type="subunit">
    <text evidence="1">Part of the 50S ribosomal subunit.</text>
</comment>
<comment type="similarity">
    <text evidence="1">Belongs to the universal ribosomal protein uL1 family.</text>
</comment>
<protein>
    <recommendedName>
        <fullName evidence="1">Large ribosomal subunit protein uL1</fullName>
    </recommendedName>
    <alternativeName>
        <fullName evidence="2">50S ribosomal protein L1</fullName>
    </alternativeName>
</protein>
<keyword id="KW-0678">Repressor</keyword>
<keyword id="KW-0687">Ribonucleoprotein</keyword>
<keyword id="KW-0689">Ribosomal protein</keyword>
<keyword id="KW-0694">RNA-binding</keyword>
<keyword id="KW-0699">rRNA-binding</keyword>
<keyword id="KW-0810">Translation regulation</keyword>
<keyword id="KW-0820">tRNA-binding</keyword>
<feature type="chain" id="PRO_1000141458" description="Large ribosomal subunit protein uL1">
    <location>
        <begin position="1"/>
        <end position="234"/>
    </location>
</feature>